<comment type="subcellular location">
    <subcellularLocation>
        <location evidence="1">Nucleus</location>
    </subcellularLocation>
</comment>
<gene>
    <name type="primary">HDX</name>
    <name type="ORF">RCJMB04_8n18</name>
</gene>
<keyword id="KW-0238">DNA-binding</keyword>
<keyword id="KW-0371">Homeobox</keyword>
<keyword id="KW-0539">Nucleus</keyword>
<keyword id="KW-1185">Reference proteome</keyword>
<keyword id="KW-0677">Repeat</keyword>
<name>HDX_CHICK</name>
<organism>
    <name type="scientific">Gallus gallus</name>
    <name type="common">Chicken</name>
    <dbReference type="NCBI Taxonomy" id="9031"/>
    <lineage>
        <taxon>Eukaryota</taxon>
        <taxon>Metazoa</taxon>
        <taxon>Chordata</taxon>
        <taxon>Craniata</taxon>
        <taxon>Vertebrata</taxon>
        <taxon>Euteleostomi</taxon>
        <taxon>Archelosauria</taxon>
        <taxon>Archosauria</taxon>
        <taxon>Dinosauria</taxon>
        <taxon>Saurischia</taxon>
        <taxon>Theropoda</taxon>
        <taxon>Coelurosauria</taxon>
        <taxon>Aves</taxon>
        <taxon>Neognathae</taxon>
        <taxon>Galloanserae</taxon>
        <taxon>Galliformes</taxon>
        <taxon>Phasianidae</taxon>
        <taxon>Phasianinae</taxon>
        <taxon>Gallus</taxon>
    </lineage>
</organism>
<protein>
    <recommendedName>
        <fullName>Highly divergent homeobox</fullName>
    </recommendedName>
</protein>
<feature type="chain" id="PRO_0000299489" description="Highly divergent homeobox">
    <location>
        <begin position="1"/>
        <end position="695"/>
    </location>
</feature>
<feature type="DNA-binding region" description="Homeobox 1" evidence="1">
    <location>
        <begin position="3"/>
        <end position="63"/>
    </location>
</feature>
<feature type="DNA-binding region" description="Homeobox 2" evidence="1">
    <location>
        <begin position="440"/>
        <end position="503"/>
    </location>
</feature>
<feature type="region of interest" description="Disordered" evidence="2">
    <location>
        <begin position="56"/>
        <end position="81"/>
    </location>
</feature>
<feature type="region of interest" description="Disordered" evidence="2">
    <location>
        <begin position="653"/>
        <end position="695"/>
    </location>
</feature>
<feature type="compositionally biased region" description="Polar residues" evidence="2">
    <location>
        <begin position="679"/>
        <end position="695"/>
    </location>
</feature>
<accession>Q5ZKW8</accession>
<dbReference type="EMBL" id="AJ719966">
    <property type="protein sequence ID" value="CAG31625.1"/>
    <property type="molecule type" value="mRNA"/>
</dbReference>
<dbReference type="RefSeq" id="NP_001026291.1">
    <property type="nucleotide sequence ID" value="NM_001031120.4"/>
</dbReference>
<dbReference type="RefSeq" id="XP_015133765.1">
    <property type="nucleotide sequence ID" value="XM_015278279.4"/>
</dbReference>
<dbReference type="RefSeq" id="XP_040554765.1">
    <property type="nucleotide sequence ID" value="XM_040698831.2"/>
</dbReference>
<dbReference type="RefSeq" id="XP_046771775.1">
    <property type="nucleotide sequence ID" value="XM_046915819.1"/>
</dbReference>
<dbReference type="SMR" id="Q5ZKW8"/>
<dbReference type="FunCoup" id="Q5ZKW8">
    <property type="interactions" value="181"/>
</dbReference>
<dbReference type="PaxDb" id="9031-ENSGALP00000011393"/>
<dbReference type="GeneID" id="422272"/>
<dbReference type="KEGG" id="gga:422272"/>
<dbReference type="CTD" id="139324"/>
<dbReference type="VEuPathDB" id="HostDB:geneid_422272"/>
<dbReference type="eggNOG" id="ENOG502QPZG">
    <property type="taxonomic scope" value="Eukaryota"/>
</dbReference>
<dbReference type="HOGENOM" id="CLU_025064_0_0_1"/>
<dbReference type="InParanoid" id="Q5ZKW8"/>
<dbReference type="OrthoDB" id="10055960at2759"/>
<dbReference type="PhylomeDB" id="Q5ZKW8"/>
<dbReference type="TreeFam" id="TF330998"/>
<dbReference type="PRO" id="PR:Q5ZKW8"/>
<dbReference type="Proteomes" id="UP000000539">
    <property type="component" value="Chromosome 4"/>
</dbReference>
<dbReference type="Bgee" id="ENSGALG00000007041">
    <property type="expression patterns" value="Expressed in spermatid and 13 other cell types or tissues"/>
</dbReference>
<dbReference type="GO" id="GO:0005634">
    <property type="term" value="C:nucleus"/>
    <property type="evidence" value="ECO:0007669"/>
    <property type="project" value="UniProtKB-SubCell"/>
</dbReference>
<dbReference type="GO" id="GO:0000981">
    <property type="term" value="F:DNA-binding transcription factor activity, RNA polymerase II-specific"/>
    <property type="evidence" value="ECO:0000318"/>
    <property type="project" value="GO_Central"/>
</dbReference>
<dbReference type="GO" id="GO:0000978">
    <property type="term" value="F:RNA polymerase II cis-regulatory region sequence-specific DNA binding"/>
    <property type="evidence" value="ECO:0000318"/>
    <property type="project" value="GO_Central"/>
</dbReference>
<dbReference type="GO" id="GO:0006357">
    <property type="term" value="P:regulation of transcription by RNA polymerase II"/>
    <property type="evidence" value="ECO:0000318"/>
    <property type="project" value="GO_Central"/>
</dbReference>
<dbReference type="CDD" id="cd00086">
    <property type="entry name" value="homeodomain"/>
    <property type="match status" value="2"/>
</dbReference>
<dbReference type="Gene3D" id="1.10.10.60">
    <property type="entry name" value="Homeodomain-like"/>
    <property type="match status" value="2"/>
</dbReference>
<dbReference type="InterPro" id="IPR001356">
    <property type="entry name" value="HD"/>
</dbReference>
<dbReference type="InterPro" id="IPR009057">
    <property type="entry name" value="Homeodomain-like_sf"/>
</dbReference>
<dbReference type="InterPro" id="IPR050255">
    <property type="entry name" value="POU_domain_TF"/>
</dbReference>
<dbReference type="PANTHER" id="PTHR11636:SF80">
    <property type="entry name" value="HIGHLY DIVERGENT HOMEOBOX"/>
    <property type="match status" value="1"/>
</dbReference>
<dbReference type="PANTHER" id="PTHR11636">
    <property type="entry name" value="POU DOMAIN"/>
    <property type="match status" value="1"/>
</dbReference>
<dbReference type="SMART" id="SM00389">
    <property type="entry name" value="HOX"/>
    <property type="match status" value="2"/>
</dbReference>
<dbReference type="SUPFAM" id="SSF46689">
    <property type="entry name" value="Homeodomain-like"/>
    <property type="match status" value="2"/>
</dbReference>
<dbReference type="PROSITE" id="PS50071">
    <property type="entry name" value="HOMEOBOX_2"/>
    <property type="match status" value="1"/>
</dbReference>
<sequence>MNLRSVFTVEQQRILQRYYENGMTNQSKNCFQLILQCAQETKLDFSVVRTWVGNKRRKMSSKSALESGGAPPGTAHTAPSVPPEAMVRNVVNIARSQSQQSSWTSSNNDVIVTGIYSPASSSNRQGSTKQTNASMAEIHKTSIPRLPGKSDADFQQQHIPIGRQIPHCKNASLLVGEKTIILSRQTSVLNSANSIYSHTKKSYGGSSVQTAELVLPQKPMICHRPCKAELMGCQRLQKPEHAALASHGPPGQRANARDPCSTQNLEIREVFSLAVTDQPQRIVGGSTAQKHCSVEGSSLSIAMETGDVDDEYAREEELASMGAQIQSYSRYYESSSSIRVENQSAALSGPGRNVSCSSQMVNARDVPDSMLYHSRDYHLPARTSLHTSSTLYNSANTSRNTFSPHFTSSNQLRLSQNQNNYQISGNLTVPWITGCSRKRALQDRTQFSDRDLATLKKYWDNGMTSLGSVCREKIEAVAAELNVDCEIVRTWIGNRRRKYRLMGIEVPPPRGGPADFSDQSEFVSKSALNPGEETATEVGDDNDRNDEVSICLSEGSSQEETNEVLQNEEIHHKDDDRNPVSADNVKIEIIDDEESDMISNSEVDQMSSLLDYKNEEVRFIENELENHKQKYFELQTFTRSLILAIKSDDKEQQQALLSDLPPELEEMDFNHTSPEPDDTSFSLSSLSEKNASDSL</sequence>
<evidence type="ECO:0000255" key="1">
    <source>
        <dbReference type="PROSITE-ProRule" id="PRU00108"/>
    </source>
</evidence>
<evidence type="ECO:0000256" key="2">
    <source>
        <dbReference type="SAM" id="MobiDB-lite"/>
    </source>
</evidence>
<proteinExistence type="evidence at transcript level"/>
<reference key="1">
    <citation type="journal article" date="2005" name="Genome Biol.">
        <title>Full-length cDNAs from chicken bursal lymphocytes to facilitate gene function analysis.</title>
        <authorList>
            <person name="Caldwell R.B."/>
            <person name="Kierzek A.M."/>
            <person name="Arakawa H."/>
            <person name="Bezzubov Y."/>
            <person name="Zaim J."/>
            <person name="Fiedler P."/>
            <person name="Kutter S."/>
            <person name="Blagodatski A."/>
            <person name="Kostovska D."/>
            <person name="Koter M."/>
            <person name="Plachy J."/>
            <person name="Carninci P."/>
            <person name="Hayashizaki Y."/>
            <person name="Buerstedde J.-M."/>
        </authorList>
    </citation>
    <scope>NUCLEOTIDE SEQUENCE [LARGE SCALE MRNA]</scope>
    <source>
        <strain>CB</strain>
        <tissue>Bursa of Fabricius</tissue>
    </source>
</reference>